<proteinExistence type="inferred from homology"/>
<accession>A9NE10</accession>
<feature type="chain" id="PRO_1000076078" description="33 kDa chaperonin">
    <location>
        <begin position="1"/>
        <end position="290"/>
    </location>
</feature>
<feature type="disulfide bond" description="Redox-active" evidence="1">
    <location>
        <begin position="236"/>
        <end position="238"/>
    </location>
</feature>
<feature type="disulfide bond" description="Redox-active" evidence="1">
    <location>
        <begin position="269"/>
        <end position="272"/>
    </location>
</feature>
<organism>
    <name type="scientific">Acholeplasma laidlawii (strain PG-8A)</name>
    <dbReference type="NCBI Taxonomy" id="441768"/>
    <lineage>
        <taxon>Bacteria</taxon>
        <taxon>Bacillati</taxon>
        <taxon>Mycoplasmatota</taxon>
        <taxon>Mollicutes</taxon>
        <taxon>Acholeplasmatales</taxon>
        <taxon>Acholeplasmataceae</taxon>
        <taxon>Acholeplasma</taxon>
    </lineage>
</organism>
<dbReference type="EMBL" id="CP000896">
    <property type="protein sequence ID" value="ABX81970.1"/>
    <property type="molecule type" value="Genomic_DNA"/>
</dbReference>
<dbReference type="RefSeq" id="WP_012243301.1">
    <property type="nucleotide sequence ID" value="NC_010163.1"/>
</dbReference>
<dbReference type="SMR" id="A9NE10"/>
<dbReference type="STRING" id="441768.ACL_1379"/>
<dbReference type="GeneID" id="41339508"/>
<dbReference type="KEGG" id="acl:ACL_1379"/>
<dbReference type="eggNOG" id="COG1281">
    <property type="taxonomic scope" value="Bacteria"/>
</dbReference>
<dbReference type="HOGENOM" id="CLU_054493_1_0_14"/>
<dbReference type="OrthoDB" id="9776534at2"/>
<dbReference type="Proteomes" id="UP000008558">
    <property type="component" value="Chromosome"/>
</dbReference>
<dbReference type="GO" id="GO:0005737">
    <property type="term" value="C:cytoplasm"/>
    <property type="evidence" value="ECO:0007669"/>
    <property type="project" value="UniProtKB-SubCell"/>
</dbReference>
<dbReference type="GO" id="GO:0044183">
    <property type="term" value="F:protein folding chaperone"/>
    <property type="evidence" value="ECO:0007669"/>
    <property type="project" value="TreeGrafter"/>
</dbReference>
<dbReference type="GO" id="GO:0051082">
    <property type="term" value="F:unfolded protein binding"/>
    <property type="evidence" value="ECO:0007669"/>
    <property type="project" value="UniProtKB-UniRule"/>
</dbReference>
<dbReference type="GO" id="GO:0042026">
    <property type="term" value="P:protein refolding"/>
    <property type="evidence" value="ECO:0007669"/>
    <property type="project" value="TreeGrafter"/>
</dbReference>
<dbReference type="CDD" id="cd00498">
    <property type="entry name" value="Hsp33"/>
    <property type="match status" value="1"/>
</dbReference>
<dbReference type="Gene3D" id="3.55.30.10">
    <property type="entry name" value="Hsp33 domain"/>
    <property type="match status" value="1"/>
</dbReference>
<dbReference type="Gene3D" id="3.90.1280.10">
    <property type="entry name" value="HSP33 redox switch-like"/>
    <property type="match status" value="1"/>
</dbReference>
<dbReference type="HAMAP" id="MF_00117">
    <property type="entry name" value="HslO"/>
    <property type="match status" value="1"/>
</dbReference>
<dbReference type="InterPro" id="IPR000397">
    <property type="entry name" value="Heat_shock_Hsp33"/>
</dbReference>
<dbReference type="InterPro" id="IPR016154">
    <property type="entry name" value="Heat_shock_Hsp33_C"/>
</dbReference>
<dbReference type="InterPro" id="IPR016153">
    <property type="entry name" value="Heat_shock_Hsp33_N"/>
</dbReference>
<dbReference type="NCBIfam" id="NF001033">
    <property type="entry name" value="PRK00114.1"/>
    <property type="match status" value="1"/>
</dbReference>
<dbReference type="PANTHER" id="PTHR30111">
    <property type="entry name" value="33 KDA CHAPERONIN"/>
    <property type="match status" value="1"/>
</dbReference>
<dbReference type="PANTHER" id="PTHR30111:SF1">
    <property type="entry name" value="33 KDA CHAPERONIN"/>
    <property type="match status" value="1"/>
</dbReference>
<dbReference type="Pfam" id="PF01430">
    <property type="entry name" value="HSP33"/>
    <property type="match status" value="1"/>
</dbReference>
<dbReference type="PIRSF" id="PIRSF005261">
    <property type="entry name" value="Heat_shock_Hsp33"/>
    <property type="match status" value="1"/>
</dbReference>
<dbReference type="SUPFAM" id="SSF64397">
    <property type="entry name" value="Hsp33 domain"/>
    <property type="match status" value="1"/>
</dbReference>
<dbReference type="SUPFAM" id="SSF118352">
    <property type="entry name" value="HSP33 redox switch-like"/>
    <property type="match status" value="1"/>
</dbReference>
<evidence type="ECO:0000255" key="1">
    <source>
        <dbReference type="HAMAP-Rule" id="MF_00117"/>
    </source>
</evidence>
<gene>
    <name evidence="1" type="primary">hslO</name>
    <name type="ordered locus">ACL_1379</name>
</gene>
<keyword id="KW-0143">Chaperone</keyword>
<keyword id="KW-0963">Cytoplasm</keyword>
<keyword id="KW-1015">Disulfide bond</keyword>
<keyword id="KW-0676">Redox-active center</keyword>
<keyword id="KW-1185">Reference proteome</keyword>
<keyword id="KW-0862">Zinc</keyword>
<reference key="1">
    <citation type="journal article" date="2011" name="J. Bacteriol.">
        <title>Complete genome and proteome of Acholeplasma laidlawii.</title>
        <authorList>
            <person name="Lazarev V.N."/>
            <person name="Levitskii S.A."/>
            <person name="Basovskii Y.I."/>
            <person name="Chukin M.M."/>
            <person name="Akopian T.A."/>
            <person name="Vereshchagin V.V."/>
            <person name="Kostrjukova E.S."/>
            <person name="Kovaleva G.Y."/>
            <person name="Kazanov M.D."/>
            <person name="Malko D.B."/>
            <person name="Vitreschak A.G."/>
            <person name="Sernova N.V."/>
            <person name="Gelfand M.S."/>
            <person name="Demina I.A."/>
            <person name="Serebryakova M.V."/>
            <person name="Galyamina M.A."/>
            <person name="Vtyurin N.N."/>
            <person name="Rogov S.I."/>
            <person name="Alexeev D.G."/>
            <person name="Ladygina V.G."/>
            <person name="Govorun V.M."/>
        </authorList>
    </citation>
    <scope>NUCLEOTIDE SEQUENCE [LARGE SCALE GENOMIC DNA]</scope>
    <source>
        <strain>PG-8A</strain>
    </source>
</reference>
<sequence>MKDYTLIALAYNQEIRIYTSVSTNLVEKSRKLHKTLPTASAAMGRFLTASAMMSLMYKDGERLTLKIDGDGPIGQMTVEAKNGVVRSTILNPNVYLVYGEGPKMGKLNVGAAVGAGTLSVTKDWKENYFTSSSPLQTGEIGDDFTYYYATSEQTPSAVGLGVLVSRGKKVIQAGGFIIQVLPHASEKTLNQLESIISKINSVTDLLKSNHTPEDMINILSDNTGEILEKHELKYHCGCSRKKYFDALSRLNKQALEDILHEDGQAEVVCQYCNKKYIYTSEDLTKMIASK</sequence>
<comment type="function">
    <text evidence="1">Redox regulated molecular chaperone. Protects both thermally unfolding and oxidatively damaged proteins from irreversible aggregation. Plays an important role in the bacterial defense system toward oxidative stress.</text>
</comment>
<comment type="subcellular location">
    <subcellularLocation>
        <location evidence="1">Cytoplasm</location>
    </subcellularLocation>
</comment>
<comment type="PTM">
    <text evidence="1">Under oxidizing conditions two disulfide bonds are formed involving the reactive cysteines. Under reducing conditions zinc is bound to the reactive cysteines and the protein is inactive.</text>
</comment>
<comment type="similarity">
    <text evidence="1">Belongs to the HSP33 family.</text>
</comment>
<protein>
    <recommendedName>
        <fullName evidence="1">33 kDa chaperonin</fullName>
    </recommendedName>
    <alternativeName>
        <fullName evidence="1">Heat shock protein 33 homolog</fullName>
        <shortName evidence="1">HSP33</shortName>
    </alternativeName>
</protein>
<name>HSLO_ACHLI</name>